<keyword id="KW-0025">Alternative splicing</keyword>
<keyword id="KW-0968">Cytoplasmic vesicle</keyword>
<keyword id="KW-0217">Developmental protein</keyword>
<keyword id="KW-0221">Differentiation</keyword>
<keyword id="KW-0597">Phosphoprotein</keyword>
<keyword id="KW-1185">Reference proteome</keyword>
<keyword id="KW-0744">Spermatogenesis</keyword>
<evidence type="ECO:0000250" key="1">
    <source>
        <dbReference type="UniProtKB" id="Q9H3C7"/>
    </source>
</evidence>
<evidence type="ECO:0000269" key="2">
    <source>
    </source>
</evidence>
<evidence type="ECO:0000269" key="3">
    <source>
    </source>
</evidence>
<evidence type="ECO:0000303" key="4">
    <source>
    </source>
</evidence>
<evidence type="ECO:0000303" key="5">
    <source>
    </source>
</evidence>
<evidence type="ECO:0000303" key="6">
    <source>
    </source>
</evidence>
<evidence type="ECO:0000305" key="7"/>
<evidence type="ECO:0007744" key="8">
    <source>
    </source>
</evidence>
<gene>
    <name type="primary">Ggnbp2</name>
    <name type="synonym">Zfp403</name>
    <name type="synonym">Znf403</name>
</gene>
<protein>
    <recommendedName>
        <fullName>Gametogenetin-binding protein 2</fullName>
    </recommendedName>
    <alternativeName>
        <fullName>Dioxin-inducible factor 3</fullName>
        <shortName>DIF-3</shortName>
    </alternativeName>
    <alternativeName>
        <fullName>Protein ZNF403</fullName>
    </alternativeName>
</protein>
<name>GGNB2_MOUSE</name>
<sequence length="696" mass="78970">MARLVAVCRDGEEEFPFERRQIPLYIDDTLTMVMEFPDNVLNLDGHQNNGAQLKQFIQRHSMLKQQDLSIAMVVTSREVLSALSQLVPCVGCRRSVERLFSQLVESGNPALEPLTVGPKGVLSLTRSCMTDAKKLYTLFYVHGSKLNDMIDAIPKSKKNKRCQLHSLDTHKPKPLGGCWMDVWELMSQECRDEVVLIDSSCLLETLETYLRKHRFCTDCKNKVLRAYNILIGELDCSKEKGYCAALYEGLRCCPHERHIHVCCETDFIAHLLGRAEPEFAGGRRERHAKTIDIAQEEVLTCLGIHLYERLHRIWQKLRAEEQTWQMLFYLGVDALRKSFEMTVEKVQGISRLEQLCEEFSEEERVRELKQEKKRQKRKNRRKNKCVCDTPASLHTADEKAVSREKETDFIENSCNACGSAEDGETCVEVMVTSENTSCTCPSSGNLLGSPKIKKGMSPHCNGSDCGYSSSMEGSETGSREGSDVACTEGICNHDEHGEDSCVHHCEDKEDDGDSCVECWANSEENNIKGKNKKKKKKSKMLKCDEHIQKLGSCITDPGNRETSGNTMHTVFHRDKTKDAHPESCCSTEKGGQPLPWFEHRKSVPQFTEPTEMSFGPDSGKGAKSLVELLDESECTSDEEIFISQDEIQSFMANNQSFYSNREQYRQHLKEKFNKYCRLNDHKRPVCSGWLTTAGAN</sequence>
<proteinExistence type="evidence at protein level"/>
<reference key="1">
    <citation type="journal article" date="2001" name="FEBS Lett.">
        <title>Dioxin induces a novel nuclear factor, DIF-3, that is implicated in spermatogenesis.</title>
        <authorList>
            <person name="Ohbayashi T."/>
            <person name="Oikawa K."/>
            <person name="Iwata R."/>
            <person name="Kameta A."/>
            <person name="Evine K."/>
            <person name="Isobe T."/>
            <person name="Matsuda Y."/>
            <person name="Mimura J."/>
            <person name="Fujii-Kuriyama Y."/>
            <person name="Kuroda M."/>
            <person name="Mukai K."/>
        </authorList>
    </citation>
    <scope>NUCLEOTIDE SEQUENCE [MRNA] (ISOFORM 3)</scope>
    <scope>TISSUE SPECIFICITY</scope>
    <scope>INDUCTION</scope>
</reference>
<reference key="2">
    <citation type="journal article" date="2005" name="FEBS Lett.">
        <title>Yeast two-hybrid screens imply that GGNBP1, GGNBP2 and OAZ3 are potential interaction partners of testicular germ cell-specific protein GGN1.</title>
        <authorList>
            <person name="Zhang J."/>
            <person name="Wang Y."/>
            <person name="Zhou Y."/>
            <person name="Cao Z."/>
            <person name="Huang P."/>
            <person name="Lu B."/>
        </authorList>
    </citation>
    <scope>NUCLEOTIDE SEQUENCE [MRNA] (ISOFORM 2)</scope>
    <scope>SUBCELLULAR LOCATION</scope>
    <scope>INTERACTION WITH GGN</scope>
</reference>
<reference key="3">
    <citation type="journal article" date="2009" name="PLoS Biol.">
        <title>Lineage-specific biology revealed by a finished genome assembly of the mouse.</title>
        <authorList>
            <person name="Church D.M."/>
            <person name="Goodstadt L."/>
            <person name="Hillier L.W."/>
            <person name="Zody M.C."/>
            <person name="Goldstein S."/>
            <person name="She X."/>
            <person name="Bult C.J."/>
            <person name="Agarwala R."/>
            <person name="Cherry J.L."/>
            <person name="DiCuccio M."/>
            <person name="Hlavina W."/>
            <person name="Kapustin Y."/>
            <person name="Meric P."/>
            <person name="Maglott D."/>
            <person name="Birtle Z."/>
            <person name="Marques A.C."/>
            <person name="Graves T."/>
            <person name="Zhou S."/>
            <person name="Teague B."/>
            <person name="Potamousis K."/>
            <person name="Churas C."/>
            <person name="Place M."/>
            <person name="Herschleb J."/>
            <person name="Runnheim R."/>
            <person name="Forrest D."/>
            <person name="Amos-Landgraf J."/>
            <person name="Schwartz D.C."/>
            <person name="Cheng Z."/>
            <person name="Lindblad-Toh K."/>
            <person name="Eichler E.E."/>
            <person name="Ponting C.P."/>
        </authorList>
    </citation>
    <scope>NUCLEOTIDE SEQUENCE [LARGE SCALE GENOMIC DNA]</scope>
    <source>
        <strain>C57BL/6J</strain>
    </source>
</reference>
<reference key="4">
    <citation type="journal article" date="2004" name="Genome Res.">
        <title>The status, quality, and expansion of the NIH full-length cDNA project: the Mammalian Gene Collection (MGC).</title>
        <authorList>
            <consortium name="The MGC Project Team"/>
        </authorList>
    </citation>
    <scope>NUCLEOTIDE SEQUENCE [LARGE SCALE MRNA] (ISOFORMS 1 AND 4)</scope>
    <source>
        <strain>NMRI</strain>
        <tissue>Brain</tissue>
        <tissue>Mammary tumor</tissue>
    </source>
</reference>
<reference key="5">
    <citation type="journal article" date="2010" name="Cell">
        <title>A tissue-specific atlas of mouse protein phosphorylation and expression.</title>
        <authorList>
            <person name="Huttlin E.L."/>
            <person name="Jedrychowski M.P."/>
            <person name="Elias J.E."/>
            <person name="Goswami T."/>
            <person name="Rad R."/>
            <person name="Beausoleil S.A."/>
            <person name="Villen J."/>
            <person name="Haas W."/>
            <person name="Sowa M.E."/>
            <person name="Gygi S.P."/>
        </authorList>
    </citation>
    <scope>PHOSPHORYLATION [LARGE SCALE ANALYSIS] AT SER-602</scope>
    <scope>IDENTIFICATION BY MASS SPECTROMETRY [LARGE SCALE ANALYSIS]</scope>
    <source>
        <tissue>Lung</tissue>
    </source>
</reference>
<accession>Q5SV77</accession>
<accession>A4QPD5</accession>
<accession>B7ZP33</accession>
<accession>Q5SV75</accession>
<accession>Q5SV76</accession>
<accession>Q5SV78</accession>
<accession>Q6GVH6</accession>
<accession>Q6P9J4</accession>
<accession>Q920N4</accession>
<dbReference type="EMBL" id="AB064543">
    <property type="protein sequence ID" value="BAB71783.1"/>
    <property type="molecule type" value="mRNA"/>
</dbReference>
<dbReference type="EMBL" id="AY633741">
    <property type="protein sequence ID" value="AAT47120.1"/>
    <property type="molecule type" value="mRNA"/>
</dbReference>
<dbReference type="EMBL" id="AL596083">
    <property type="protein sequence ID" value="CAI24981.1"/>
    <property type="molecule type" value="Genomic_DNA"/>
</dbReference>
<dbReference type="EMBL" id="AL645623">
    <property type="protein sequence ID" value="CAI24981.1"/>
    <property type="status" value="JOINED"/>
    <property type="molecule type" value="Genomic_DNA"/>
</dbReference>
<dbReference type="EMBL" id="AL596083">
    <property type="protein sequence ID" value="CAI24982.1"/>
    <property type="molecule type" value="Genomic_DNA"/>
</dbReference>
<dbReference type="EMBL" id="AL645623">
    <property type="protein sequence ID" value="CAI24982.1"/>
    <property type="status" value="JOINED"/>
    <property type="molecule type" value="Genomic_DNA"/>
</dbReference>
<dbReference type="EMBL" id="AL596083">
    <property type="protein sequence ID" value="CAI24983.1"/>
    <property type="status" value="ALT_SEQ"/>
    <property type="molecule type" value="Genomic_DNA"/>
</dbReference>
<dbReference type="EMBL" id="AL645623">
    <property type="protein sequence ID" value="CAI24983.1"/>
    <property type="status" value="JOINED"/>
    <property type="molecule type" value="Genomic_DNA"/>
</dbReference>
<dbReference type="EMBL" id="AL645623">
    <property type="protein sequence ID" value="CAI25484.1"/>
    <property type="status" value="ALT_SEQ"/>
    <property type="molecule type" value="Genomic_DNA"/>
</dbReference>
<dbReference type="EMBL" id="AL645623">
    <property type="protein sequence ID" value="CAI25485.1"/>
    <property type="molecule type" value="Genomic_DNA"/>
</dbReference>
<dbReference type="EMBL" id="AL596083">
    <property type="protein sequence ID" value="CAI25485.1"/>
    <property type="status" value="JOINED"/>
    <property type="molecule type" value="Genomic_DNA"/>
</dbReference>
<dbReference type="EMBL" id="AL645623">
    <property type="protein sequence ID" value="CAI25486.1"/>
    <property type="molecule type" value="Genomic_DNA"/>
</dbReference>
<dbReference type="EMBL" id="AL596083">
    <property type="protein sequence ID" value="CAI25486.1"/>
    <property type="status" value="JOINED"/>
    <property type="molecule type" value="Genomic_DNA"/>
</dbReference>
<dbReference type="EMBL" id="AL645623">
    <property type="protein sequence ID" value="CAI25487.1"/>
    <property type="status" value="ALT_SEQ"/>
    <property type="molecule type" value="Genomic_DNA"/>
</dbReference>
<dbReference type="EMBL" id="AL596083">
    <property type="protein sequence ID" value="CAI25487.1"/>
    <property type="status" value="JOINED"/>
    <property type="molecule type" value="Genomic_DNA"/>
</dbReference>
<dbReference type="EMBL" id="BC060738">
    <property type="protein sequence ID" value="AAH60738.1"/>
    <property type="status" value="ALT_SEQ"/>
    <property type="molecule type" value="mRNA"/>
</dbReference>
<dbReference type="EMBL" id="BC139772">
    <property type="protein sequence ID" value="AAI39773.1"/>
    <property type="molecule type" value="mRNA"/>
</dbReference>
<dbReference type="EMBL" id="BC145605">
    <property type="protein sequence ID" value="AAI45606.1"/>
    <property type="molecule type" value="mRNA"/>
</dbReference>
<dbReference type="EMBL" id="BC150801">
    <property type="protein sequence ID" value="AAI50802.1"/>
    <property type="molecule type" value="mRNA"/>
</dbReference>
<dbReference type="CCDS" id="CCDS36262.1">
    <molecule id="Q5SV77-2"/>
</dbReference>
<dbReference type="CCDS" id="CCDS88210.1">
    <molecule id="Q5SV77-1"/>
</dbReference>
<dbReference type="CCDS" id="CCDS88211.1">
    <molecule id="Q5SV77-4"/>
</dbReference>
<dbReference type="RefSeq" id="NP_001351040.1">
    <molecule id="Q5SV77-3"/>
    <property type="nucleotide sequence ID" value="NM_001364111.1"/>
</dbReference>
<dbReference type="RefSeq" id="NP_001351041.1">
    <molecule id="Q5SV77-4"/>
    <property type="nucleotide sequence ID" value="NM_001364112.1"/>
</dbReference>
<dbReference type="RefSeq" id="NP_001351043.1">
    <molecule id="Q5SV77-1"/>
    <property type="nucleotide sequence ID" value="NM_001364114.1"/>
</dbReference>
<dbReference type="RefSeq" id="NP_001351044.1">
    <molecule id="Q5SV77-1"/>
    <property type="nucleotide sequence ID" value="NM_001364115.1"/>
</dbReference>
<dbReference type="RefSeq" id="NP_694784.2">
    <molecule id="Q5SV77-2"/>
    <property type="nucleotide sequence ID" value="NM_153144.3"/>
</dbReference>
<dbReference type="RefSeq" id="XP_011247235.1">
    <property type="nucleotide sequence ID" value="XM_011248933.2"/>
</dbReference>
<dbReference type="RefSeq" id="XP_017169962.1">
    <molecule id="Q5SV77-2"/>
    <property type="nucleotide sequence ID" value="XM_017314473.3"/>
</dbReference>
<dbReference type="RefSeq" id="XP_017169963.1">
    <property type="nucleotide sequence ID" value="XM_017314474.1"/>
</dbReference>
<dbReference type="RefSeq" id="XP_017169964.1">
    <property type="nucleotide sequence ID" value="XM_017314475.1"/>
</dbReference>
<dbReference type="RefSeq" id="XP_030101708.1">
    <molecule id="Q5SV77-3"/>
    <property type="nucleotide sequence ID" value="XM_030245848.2"/>
</dbReference>
<dbReference type="RefSeq" id="XP_030101709.1">
    <molecule id="Q5SV77-4"/>
    <property type="nucleotide sequence ID" value="XM_030245849.1"/>
</dbReference>
<dbReference type="RefSeq" id="XP_030101710.1">
    <molecule id="Q5SV77-2"/>
    <property type="nucleotide sequence ID" value="XM_030245850.2"/>
</dbReference>
<dbReference type="RefSeq" id="XP_030101711.1">
    <molecule id="Q5SV77-1"/>
    <property type="nucleotide sequence ID" value="XM_030245851.2"/>
</dbReference>
<dbReference type="RefSeq" id="XP_030101713.1">
    <molecule id="Q5SV77-2"/>
    <property type="nucleotide sequence ID" value="XM_030245853.1"/>
</dbReference>
<dbReference type="RefSeq" id="XP_030101714.1">
    <molecule id="Q5SV77-1"/>
    <property type="nucleotide sequence ID" value="XM_030245854.1"/>
</dbReference>
<dbReference type="RefSeq" id="XP_036012478.1">
    <molecule id="Q5SV77-3"/>
    <property type="nucleotide sequence ID" value="XM_036156585.1"/>
</dbReference>
<dbReference type="RefSeq" id="XP_036012479.1">
    <molecule id="Q5SV77-4"/>
    <property type="nucleotide sequence ID" value="XM_036156586.1"/>
</dbReference>
<dbReference type="SMR" id="Q5SV77"/>
<dbReference type="BioGRID" id="229837">
    <property type="interactions" value="1"/>
</dbReference>
<dbReference type="FunCoup" id="Q5SV77">
    <property type="interactions" value="5304"/>
</dbReference>
<dbReference type="IntAct" id="Q5SV77">
    <property type="interactions" value="3"/>
</dbReference>
<dbReference type="MINT" id="Q5SV77"/>
<dbReference type="STRING" id="10090.ENSMUSP00000103716"/>
<dbReference type="GlyGen" id="Q5SV77">
    <property type="glycosylation" value="2 sites, 1 O-linked glycan (2 sites)"/>
</dbReference>
<dbReference type="iPTMnet" id="Q5SV77"/>
<dbReference type="PhosphoSitePlus" id="Q5SV77"/>
<dbReference type="SwissPalm" id="Q5SV77"/>
<dbReference type="PaxDb" id="10090-ENSMUSP00000018547"/>
<dbReference type="ProteomicsDB" id="267436">
    <molecule id="Q5SV77-1"/>
</dbReference>
<dbReference type="ProteomicsDB" id="267437">
    <molecule id="Q5SV77-2"/>
</dbReference>
<dbReference type="ProteomicsDB" id="267438">
    <molecule id="Q5SV77-3"/>
</dbReference>
<dbReference type="ProteomicsDB" id="267439">
    <molecule id="Q5SV77-4"/>
</dbReference>
<dbReference type="Pumba" id="Q5SV77"/>
<dbReference type="Antibodypedia" id="73502">
    <property type="antibodies" value="90 antibodies from 17 providers"/>
</dbReference>
<dbReference type="DNASU" id="217039"/>
<dbReference type="Ensembl" id="ENSMUST00000018547.9">
    <molecule id="Q5SV77-4"/>
    <property type="protein sequence ID" value="ENSMUSP00000018547.3"/>
    <property type="gene ID" value="ENSMUSG00000020530.15"/>
</dbReference>
<dbReference type="Ensembl" id="ENSMUST00000108081.9">
    <molecule id="Q5SV77-2"/>
    <property type="protein sequence ID" value="ENSMUSP00000103716.3"/>
    <property type="gene ID" value="ENSMUSG00000020530.15"/>
</dbReference>
<dbReference type="Ensembl" id="ENSMUST00000154915.9">
    <molecule id="Q5SV77-1"/>
    <property type="protein sequence ID" value="ENSMUSP00000117482.3"/>
    <property type="gene ID" value="ENSMUSG00000020530.15"/>
</dbReference>
<dbReference type="Ensembl" id="ENSMUST00000168434.8">
    <molecule id="Q5SV77-1"/>
    <property type="protein sequence ID" value="ENSMUSP00000130013.2"/>
    <property type="gene ID" value="ENSMUSG00000020530.15"/>
</dbReference>
<dbReference type="Ensembl" id="ENSMUST00000172405.8">
    <molecule id="Q5SV77-2"/>
    <property type="protein sequence ID" value="ENSMUSP00000127584.2"/>
    <property type="gene ID" value="ENSMUSG00000020530.15"/>
</dbReference>
<dbReference type="GeneID" id="217039"/>
<dbReference type="KEGG" id="mmu:217039"/>
<dbReference type="UCSC" id="uc007kqu.1">
    <molecule id="Q5SV77-1"/>
    <property type="organism name" value="mouse"/>
</dbReference>
<dbReference type="UCSC" id="uc007kqv.1">
    <molecule id="Q5SV77-2"/>
    <property type="organism name" value="mouse"/>
</dbReference>
<dbReference type="UCSC" id="uc011ybk.1">
    <molecule id="Q5SV77-4"/>
    <property type="organism name" value="mouse"/>
</dbReference>
<dbReference type="AGR" id="MGI:2387356"/>
<dbReference type="CTD" id="79893"/>
<dbReference type="MGI" id="MGI:2387356">
    <property type="gene designation" value="Ggnbp2"/>
</dbReference>
<dbReference type="VEuPathDB" id="HostDB:ENSMUSG00000020530"/>
<dbReference type="eggNOG" id="ENOG502QQ20">
    <property type="taxonomic scope" value="Eukaryota"/>
</dbReference>
<dbReference type="GeneTree" id="ENSGT00390000009552"/>
<dbReference type="InParanoid" id="Q5SV77"/>
<dbReference type="OMA" id="MMLMDLN"/>
<dbReference type="PhylomeDB" id="Q5SV77"/>
<dbReference type="TreeFam" id="TF323487"/>
<dbReference type="BioGRID-ORCS" id="217039">
    <property type="hits" value="11 hits in 75 CRISPR screens"/>
</dbReference>
<dbReference type="ChiTaRS" id="Ggnbp2">
    <property type="organism name" value="mouse"/>
</dbReference>
<dbReference type="PRO" id="PR:Q5SV77"/>
<dbReference type="Proteomes" id="UP000000589">
    <property type="component" value="Chromosome 11"/>
</dbReference>
<dbReference type="RNAct" id="Q5SV77">
    <property type="molecule type" value="protein"/>
</dbReference>
<dbReference type="Bgee" id="ENSMUSG00000020530">
    <property type="expression patterns" value="Expressed in spermatid and 257 other cell types or tissues"/>
</dbReference>
<dbReference type="ExpressionAtlas" id="Q5SV77">
    <property type="expression patterns" value="baseline and differential"/>
</dbReference>
<dbReference type="GO" id="GO:0005737">
    <property type="term" value="C:cytoplasm"/>
    <property type="evidence" value="ECO:0000314"/>
    <property type="project" value="MGI"/>
</dbReference>
<dbReference type="GO" id="GO:0031410">
    <property type="term" value="C:cytoplasmic vesicle"/>
    <property type="evidence" value="ECO:0007669"/>
    <property type="project" value="UniProtKB-KW"/>
</dbReference>
<dbReference type="GO" id="GO:0005634">
    <property type="term" value="C:nucleus"/>
    <property type="evidence" value="ECO:0000314"/>
    <property type="project" value="MGI"/>
</dbReference>
<dbReference type="GO" id="GO:0030154">
    <property type="term" value="P:cell differentiation"/>
    <property type="evidence" value="ECO:0000314"/>
    <property type="project" value="MGI"/>
</dbReference>
<dbReference type="GO" id="GO:0060716">
    <property type="term" value="P:labyrinthine layer blood vessel development"/>
    <property type="evidence" value="ECO:0000315"/>
    <property type="project" value="MGI"/>
</dbReference>
<dbReference type="GO" id="GO:0060711">
    <property type="term" value="P:labyrinthine layer development"/>
    <property type="evidence" value="ECO:0000315"/>
    <property type="project" value="MGI"/>
</dbReference>
<dbReference type="GO" id="GO:0008285">
    <property type="term" value="P:negative regulation of cell population proliferation"/>
    <property type="evidence" value="ECO:0000314"/>
    <property type="project" value="MGI"/>
</dbReference>
<dbReference type="GO" id="GO:0010629">
    <property type="term" value="P:negative regulation of gene expression"/>
    <property type="evidence" value="ECO:0000314"/>
    <property type="project" value="MGI"/>
</dbReference>
<dbReference type="GO" id="GO:1904893">
    <property type="term" value="P:negative regulation of receptor signaling pathway via STAT"/>
    <property type="evidence" value="ECO:0000315"/>
    <property type="project" value="MGI"/>
</dbReference>
<dbReference type="GO" id="GO:0007283">
    <property type="term" value="P:spermatogenesis"/>
    <property type="evidence" value="ECO:0007669"/>
    <property type="project" value="UniProtKB-KW"/>
</dbReference>
<dbReference type="InterPro" id="IPR026073">
    <property type="entry name" value="GGNBP2"/>
</dbReference>
<dbReference type="PANTHER" id="PTHR13601">
    <property type="entry name" value="GAMETOGENETIN-BINDING PROTEIN 2"/>
    <property type="match status" value="1"/>
</dbReference>
<dbReference type="PANTHER" id="PTHR13601:SF2">
    <property type="entry name" value="GAMETOGENETIN-BINDING PROTEIN 2"/>
    <property type="match status" value="1"/>
</dbReference>
<organism>
    <name type="scientific">Mus musculus</name>
    <name type="common">Mouse</name>
    <dbReference type="NCBI Taxonomy" id="10090"/>
    <lineage>
        <taxon>Eukaryota</taxon>
        <taxon>Metazoa</taxon>
        <taxon>Chordata</taxon>
        <taxon>Craniata</taxon>
        <taxon>Vertebrata</taxon>
        <taxon>Euteleostomi</taxon>
        <taxon>Mammalia</taxon>
        <taxon>Eutheria</taxon>
        <taxon>Euarchontoglires</taxon>
        <taxon>Glires</taxon>
        <taxon>Rodentia</taxon>
        <taxon>Myomorpha</taxon>
        <taxon>Muroidea</taxon>
        <taxon>Muridae</taxon>
        <taxon>Murinae</taxon>
        <taxon>Mus</taxon>
        <taxon>Mus</taxon>
    </lineage>
</organism>
<comment type="function">
    <text>May be involved in spermatogenesis.</text>
</comment>
<comment type="subunit">
    <text evidence="3">Interacts with isoform 1 of GGN.</text>
</comment>
<comment type="interaction">
    <interactant intactId="EBI-4370069">
        <id>Q5SV77</id>
    </interactant>
    <interactant intactId="EBI-3890505">
        <id>Q80WJ1</id>
        <label>Ggn</label>
    </interactant>
    <organismsDiffer>false</organismsDiffer>
    <experiments>3</experiments>
</comment>
<comment type="subcellular location">
    <subcellularLocation>
        <location evidence="3">Cytoplasmic vesicle</location>
    </subcellularLocation>
    <text>Associated with vesicular structures.</text>
</comment>
<comment type="alternative products">
    <event type="alternative splicing"/>
    <isoform>
        <id>Q5SV77-1</id>
        <name>1</name>
        <sequence type="displayed"/>
    </isoform>
    <isoform>
        <id>Q5SV77-2</id>
        <name>2</name>
        <sequence type="described" ref="VSP_019180"/>
    </isoform>
    <isoform>
        <id>Q5SV77-3</id>
        <name>3</name>
        <sequence type="described" ref="VSP_019179 VSP_019180"/>
    </isoform>
    <isoform>
        <id>Q5SV77-4</id>
        <name>4</name>
        <sequence type="described" ref="VSP_019179"/>
    </isoform>
</comment>
<comment type="tissue specificity">
    <text evidence="2">Testis-specific.</text>
</comment>
<comment type="developmental stage">
    <text>Abundantly expressed during spermatogenesis. Not detected in newborn animals, in which spermatogenesis has not yet progressed beyond the earliest stages.</text>
</comment>
<comment type="induction">
    <text evidence="2">By dioxin (2,3,7,8-Tetrachlorodibenzo-p-dioxin).</text>
</comment>
<comment type="sequence caution" evidence="7">
    <conflict type="miscellaneous discrepancy">
        <sequence resource="EMBL-CDS" id="AAH60738"/>
    </conflict>
    <text>Contaminating sequence. Potential poly-A sequence.</text>
</comment>
<comment type="sequence caution" evidence="7">
    <conflict type="erroneous gene model prediction">
        <sequence resource="EMBL-CDS" id="CAI24983"/>
    </conflict>
</comment>
<comment type="sequence caution" evidence="7">
    <conflict type="erroneous gene model prediction">
        <sequence resource="EMBL-CDS" id="CAI25484"/>
    </conflict>
</comment>
<comment type="sequence caution" evidence="7">
    <conflict type="erroneous gene model prediction">
        <sequence resource="EMBL-CDS" id="CAI25487"/>
    </conflict>
</comment>
<feature type="chain" id="PRO_0000239349" description="Gametogenetin-binding protein 2">
    <location>
        <begin position="1"/>
        <end position="696"/>
    </location>
</feature>
<feature type="modified residue" description="Phosphoserine" evidence="1">
    <location>
        <position position="360"/>
    </location>
</feature>
<feature type="modified residue" description="Phosphoserine" evidence="8">
    <location>
        <position position="602"/>
    </location>
</feature>
<feature type="splice variant" id="VSP_019179" description="In isoform 3 and isoform 4." evidence="4 5">
    <original>G</original>
    <variation>GEGSSSSVSSEKLSTDKRSSEDHRKDSKCRIIFHYGPFQGTAR</variation>
    <location>
        <position position="176"/>
    </location>
</feature>
<feature type="splice variant" id="VSP_019180" description="In isoform 2 and isoform 3." evidence="4 6">
    <original>G</original>
    <variation>GYE</variation>
    <location>
        <position position="282"/>
    </location>
</feature>
<feature type="sequence conflict" description="In Ref. 4; AAI45606/AAI50802." evidence="7" ref="4">
    <original>D</original>
    <variation>N</variation>
    <location>
        <position position="510"/>
    </location>
</feature>
<feature type="sequence conflict" description="In Ref. 1; BAB71783." evidence="7" ref="1">
    <original>G</original>
    <variation>GG</variation>
    <location sequence="Q5SV77-3">
        <position position="219"/>
    </location>
</feature>